<reference key="1">
    <citation type="journal article" date="2006" name="Proc. Natl. Acad. Sci. U.S.A.">
        <title>Genome reduction in Leptospira borgpetersenii reflects limited transmission potential.</title>
        <authorList>
            <person name="Bulach D.M."/>
            <person name="Zuerner R.L."/>
            <person name="Wilson P."/>
            <person name="Seemann T."/>
            <person name="McGrath A."/>
            <person name="Cullen P.A."/>
            <person name="Davis J."/>
            <person name="Johnson M."/>
            <person name="Kuczek E."/>
            <person name="Alt D.P."/>
            <person name="Peterson-Burch B."/>
            <person name="Coppel R.L."/>
            <person name="Rood J.I."/>
            <person name="Davies J.K."/>
            <person name="Adler B."/>
        </authorList>
    </citation>
    <scope>NUCLEOTIDE SEQUENCE [LARGE SCALE GENOMIC DNA]</scope>
    <source>
        <strain>L550</strain>
    </source>
</reference>
<gene>
    <name evidence="1" type="primary">argB</name>
    <name type="ordered locus">LBL_4112</name>
</gene>
<proteinExistence type="inferred from homology"/>
<keyword id="KW-0028">Amino-acid biosynthesis</keyword>
<keyword id="KW-0055">Arginine biosynthesis</keyword>
<keyword id="KW-0067">ATP-binding</keyword>
<keyword id="KW-0963">Cytoplasm</keyword>
<keyword id="KW-0418">Kinase</keyword>
<keyword id="KW-0547">Nucleotide-binding</keyword>
<keyword id="KW-0808">Transferase</keyword>
<protein>
    <recommendedName>
        <fullName evidence="1">Acetylglutamate kinase</fullName>
        <ecNumber evidence="1">2.7.2.8</ecNumber>
    </recommendedName>
    <alternativeName>
        <fullName evidence="1">N-acetyl-L-glutamate 5-phosphotransferase</fullName>
    </alternativeName>
    <alternativeName>
        <fullName evidence="1">NAG kinase</fullName>
        <shortName evidence="1">NAGK</shortName>
    </alternativeName>
</protein>
<name>ARGB_LEPBL</name>
<sequence>MEKLLERVNHILEALPYITKYSGKTVVIKYGGAAMAKADLKESFAKDIVLLKYVGIHPVIVHGGGPEINRLLDSLKIPTEFIHGHRVTDTQTMEVVEMVLTGKVNKQIVSMINSQGGKAVGISGKDGNLAKAVKAPIEIELEGKEKQLFDVGLVGRIESINPEILHNLQKEGFIPVISPVAESVEGDSLNINADTFAGEIAGALEAEKLILLTDTEGILIDGKLATGLSRGKMKEYIRKGEISGGMIPKVECCLAAIDQGVNRTHIIDGRVSHSILIEIFTNQGIGSLIES</sequence>
<comment type="function">
    <text evidence="1">Catalyzes the ATP-dependent phosphorylation of N-acetyl-L-glutamate.</text>
</comment>
<comment type="catalytic activity">
    <reaction evidence="1">
        <text>N-acetyl-L-glutamate + ATP = N-acetyl-L-glutamyl 5-phosphate + ADP</text>
        <dbReference type="Rhea" id="RHEA:14629"/>
        <dbReference type="ChEBI" id="CHEBI:30616"/>
        <dbReference type="ChEBI" id="CHEBI:44337"/>
        <dbReference type="ChEBI" id="CHEBI:57936"/>
        <dbReference type="ChEBI" id="CHEBI:456216"/>
        <dbReference type="EC" id="2.7.2.8"/>
    </reaction>
</comment>
<comment type="pathway">
    <text evidence="1">Amino-acid biosynthesis; L-arginine biosynthesis; N(2)-acetyl-L-ornithine from L-glutamate: step 2/4.</text>
</comment>
<comment type="subcellular location">
    <subcellularLocation>
        <location evidence="1">Cytoplasm</location>
    </subcellularLocation>
</comment>
<comment type="similarity">
    <text evidence="1">Belongs to the acetylglutamate kinase family. ArgB subfamily.</text>
</comment>
<organism>
    <name type="scientific">Leptospira borgpetersenii serovar Hardjo-bovis (strain L550)</name>
    <dbReference type="NCBI Taxonomy" id="355276"/>
    <lineage>
        <taxon>Bacteria</taxon>
        <taxon>Pseudomonadati</taxon>
        <taxon>Spirochaetota</taxon>
        <taxon>Spirochaetia</taxon>
        <taxon>Leptospirales</taxon>
        <taxon>Leptospiraceae</taxon>
        <taxon>Leptospira</taxon>
    </lineage>
</organism>
<accession>Q04WW3</accession>
<feature type="chain" id="PRO_0000335641" description="Acetylglutamate kinase">
    <location>
        <begin position="1"/>
        <end position="291"/>
    </location>
</feature>
<feature type="binding site" evidence="1">
    <location>
        <begin position="64"/>
        <end position="65"/>
    </location>
    <ligand>
        <name>substrate</name>
    </ligand>
</feature>
<feature type="binding site" evidence="1">
    <location>
        <position position="86"/>
    </location>
    <ligand>
        <name>substrate</name>
    </ligand>
</feature>
<feature type="binding site" evidence="1">
    <location>
        <position position="190"/>
    </location>
    <ligand>
        <name>substrate</name>
    </ligand>
</feature>
<feature type="site" description="Transition state stabilizer" evidence="1">
    <location>
        <position position="29"/>
    </location>
</feature>
<feature type="site" description="Transition state stabilizer" evidence="1">
    <location>
        <position position="249"/>
    </location>
</feature>
<dbReference type="EC" id="2.7.2.8" evidence="1"/>
<dbReference type="EMBL" id="CP000349">
    <property type="protein sequence ID" value="ABJ80432.1"/>
    <property type="molecule type" value="Genomic_DNA"/>
</dbReference>
<dbReference type="RefSeq" id="WP_011671312.1">
    <property type="nucleotide sequence ID" value="NC_008509.1"/>
</dbReference>
<dbReference type="SMR" id="Q04WW3"/>
<dbReference type="KEGG" id="lbl:LBL_4112"/>
<dbReference type="HOGENOM" id="CLU_053680_0_0_12"/>
<dbReference type="UniPathway" id="UPA00068">
    <property type="reaction ID" value="UER00107"/>
</dbReference>
<dbReference type="GO" id="GO:0005737">
    <property type="term" value="C:cytoplasm"/>
    <property type="evidence" value="ECO:0007669"/>
    <property type="project" value="UniProtKB-SubCell"/>
</dbReference>
<dbReference type="GO" id="GO:0003991">
    <property type="term" value="F:acetylglutamate kinase activity"/>
    <property type="evidence" value="ECO:0007669"/>
    <property type="project" value="UniProtKB-UniRule"/>
</dbReference>
<dbReference type="GO" id="GO:0005524">
    <property type="term" value="F:ATP binding"/>
    <property type="evidence" value="ECO:0007669"/>
    <property type="project" value="UniProtKB-UniRule"/>
</dbReference>
<dbReference type="GO" id="GO:0042450">
    <property type="term" value="P:arginine biosynthetic process via ornithine"/>
    <property type="evidence" value="ECO:0007669"/>
    <property type="project" value="UniProtKB-UniRule"/>
</dbReference>
<dbReference type="GO" id="GO:0006526">
    <property type="term" value="P:L-arginine biosynthetic process"/>
    <property type="evidence" value="ECO:0007669"/>
    <property type="project" value="UniProtKB-UniPathway"/>
</dbReference>
<dbReference type="CDD" id="cd04250">
    <property type="entry name" value="AAK_NAGK-C"/>
    <property type="match status" value="1"/>
</dbReference>
<dbReference type="FunFam" id="3.40.1160.10:FF:000004">
    <property type="entry name" value="Acetylglutamate kinase"/>
    <property type="match status" value="1"/>
</dbReference>
<dbReference type="Gene3D" id="3.40.1160.10">
    <property type="entry name" value="Acetylglutamate kinase-like"/>
    <property type="match status" value="1"/>
</dbReference>
<dbReference type="HAMAP" id="MF_00082">
    <property type="entry name" value="ArgB"/>
    <property type="match status" value="1"/>
</dbReference>
<dbReference type="InterPro" id="IPR036393">
    <property type="entry name" value="AceGlu_kinase-like_sf"/>
</dbReference>
<dbReference type="InterPro" id="IPR004662">
    <property type="entry name" value="AcgluKinase_fam"/>
</dbReference>
<dbReference type="InterPro" id="IPR037528">
    <property type="entry name" value="ArgB"/>
</dbReference>
<dbReference type="InterPro" id="IPR001048">
    <property type="entry name" value="Asp/Glu/Uridylate_kinase"/>
</dbReference>
<dbReference type="InterPro" id="IPR041727">
    <property type="entry name" value="NAGK-C"/>
</dbReference>
<dbReference type="NCBIfam" id="TIGR00761">
    <property type="entry name" value="argB"/>
    <property type="match status" value="1"/>
</dbReference>
<dbReference type="PANTHER" id="PTHR23342">
    <property type="entry name" value="N-ACETYLGLUTAMATE SYNTHASE"/>
    <property type="match status" value="1"/>
</dbReference>
<dbReference type="PANTHER" id="PTHR23342:SF0">
    <property type="entry name" value="N-ACETYLGLUTAMATE SYNTHASE, MITOCHONDRIAL"/>
    <property type="match status" value="1"/>
</dbReference>
<dbReference type="Pfam" id="PF00696">
    <property type="entry name" value="AA_kinase"/>
    <property type="match status" value="1"/>
</dbReference>
<dbReference type="PIRSF" id="PIRSF000728">
    <property type="entry name" value="NAGK"/>
    <property type="match status" value="1"/>
</dbReference>
<dbReference type="SUPFAM" id="SSF53633">
    <property type="entry name" value="Carbamate kinase-like"/>
    <property type="match status" value="1"/>
</dbReference>
<evidence type="ECO:0000255" key="1">
    <source>
        <dbReference type="HAMAP-Rule" id="MF_00082"/>
    </source>
</evidence>